<organism>
    <name type="scientific">Muscicapa striata</name>
    <name type="common">Spotted flycatcher</name>
    <name type="synonym">Setophaga striata</name>
    <dbReference type="NCBI Taxonomy" id="1212470"/>
    <lineage>
        <taxon>Eukaryota</taxon>
        <taxon>Metazoa</taxon>
        <taxon>Chordata</taxon>
        <taxon>Craniata</taxon>
        <taxon>Vertebrata</taxon>
        <taxon>Euteleostomi</taxon>
        <taxon>Archelosauria</taxon>
        <taxon>Archosauria</taxon>
        <taxon>Dinosauria</taxon>
        <taxon>Saurischia</taxon>
        <taxon>Theropoda</taxon>
        <taxon>Coelurosauria</taxon>
        <taxon>Aves</taxon>
        <taxon>Neognathae</taxon>
        <taxon>Neoaves</taxon>
        <taxon>Telluraves</taxon>
        <taxon>Australaves</taxon>
        <taxon>Passeriformes</taxon>
        <taxon>Passeroidea</taxon>
        <taxon>Parulidae</taxon>
        <taxon>Setophaga</taxon>
    </lineage>
</organism>
<feature type="chain" id="PRO_0000061226" description="Cytochrome b">
    <location>
        <begin position="1"/>
        <end position="380"/>
    </location>
</feature>
<feature type="transmembrane region" description="Helical" evidence="2">
    <location>
        <begin position="34"/>
        <end position="54"/>
    </location>
</feature>
<feature type="transmembrane region" description="Helical" evidence="2">
    <location>
        <begin position="78"/>
        <end position="99"/>
    </location>
</feature>
<feature type="transmembrane region" description="Helical" evidence="2">
    <location>
        <begin position="114"/>
        <end position="134"/>
    </location>
</feature>
<feature type="transmembrane region" description="Helical" evidence="2">
    <location>
        <begin position="179"/>
        <end position="199"/>
    </location>
</feature>
<feature type="transmembrane region" description="Helical" evidence="2">
    <location>
        <begin position="227"/>
        <end position="247"/>
    </location>
</feature>
<feature type="transmembrane region" description="Helical" evidence="2">
    <location>
        <begin position="289"/>
        <end position="309"/>
    </location>
</feature>
<feature type="transmembrane region" description="Helical" evidence="2">
    <location>
        <begin position="321"/>
        <end position="341"/>
    </location>
</feature>
<feature type="transmembrane region" description="Helical" evidence="2">
    <location>
        <begin position="348"/>
        <end position="368"/>
    </location>
</feature>
<feature type="binding site" description="axial binding residue" evidence="2">
    <location>
        <position position="84"/>
    </location>
    <ligand>
        <name>heme b</name>
        <dbReference type="ChEBI" id="CHEBI:60344"/>
        <label>b562</label>
    </ligand>
    <ligandPart>
        <name>Fe</name>
        <dbReference type="ChEBI" id="CHEBI:18248"/>
    </ligandPart>
</feature>
<feature type="binding site" description="axial binding residue" evidence="2">
    <location>
        <position position="98"/>
    </location>
    <ligand>
        <name>heme b</name>
        <dbReference type="ChEBI" id="CHEBI:60344"/>
        <label>b566</label>
    </ligand>
    <ligandPart>
        <name>Fe</name>
        <dbReference type="ChEBI" id="CHEBI:18248"/>
    </ligandPart>
</feature>
<feature type="binding site" description="axial binding residue" evidence="2">
    <location>
        <position position="183"/>
    </location>
    <ligand>
        <name>heme b</name>
        <dbReference type="ChEBI" id="CHEBI:60344"/>
        <label>b562</label>
    </ligand>
    <ligandPart>
        <name>Fe</name>
        <dbReference type="ChEBI" id="CHEBI:18248"/>
    </ligandPart>
</feature>
<feature type="binding site" description="axial binding residue" evidence="2">
    <location>
        <position position="197"/>
    </location>
    <ligand>
        <name>heme b</name>
        <dbReference type="ChEBI" id="CHEBI:60344"/>
        <label>b566</label>
    </ligand>
    <ligandPart>
        <name>Fe</name>
        <dbReference type="ChEBI" id="CHEBI:18248"/>
    </ligandPart>
</feature>
<feature type="binding site" evidence="2">
    <location>
        <position position="202"/>
    </location>
    <ligand>
        <name>a ubiquinone</name>
        <dbReference type="ChEBI" id="CHEBI:16389"/>
    </ligand>
</feature>
<evidence type="ECO:0000250" key="1"/>
<evidence type="ECO:0000250" key="2">
    <source>
        <dbReference type="UniProtKB" id="P00157"/>
    </source>
</evidence>
<evidence type="ECO:0000255" key="3">
    <source>
        <dbReference type="PROSITE-ProRule" id="PRU00967"/>
    </source>
</evidence>
<evidence type="ECO:0000255" key="4">
    <source>
        <dbReference type="PROSITE-ProRule" id="PRU00968"/>
    </source>
</evidence>
<geneLocation type="mitochondrion"/>
<reference key="1">
    <citation type="journal article" date="2001" name="Mol. Ecol.">
        <title>Speciation, introgressive hybridization and nonlinear rate of molecular evolution in flycatchers.</title>
        <authorList>
            <person name="Saetre G.P."/>
            <person name="Borge T."/>
            <person name="Lindell J."/>
            <person name="Moum T."/>
            <person name="Primmer C.R."/>
            <person name="Sheldon B.C."/>
            <person name="Haavie J."/>
            <person name="Johnsen A."/>
            <person name="Ellegren H."/>
        </authorList>
    </citation>
    <scope>NUCLEOTIDE SEQUENCE [GENOMIC DNA]</scope>
    <source>
        <strain>Isolate Cz1</strain>
        <tissue>Blood</tissue>
    </source>
</reference>
<keyword id="KW-0249">Electron transport</keyword>
<keyword id="KW-0349">Heme</keyword>
<keyword id="KW-0408">Iron</keyword>
<keyword id="KW-0472">Membrane</keyword>
<keyword id="KW-0479">Metal-binding</keyword>
<keyword id="KW-0496">Mitochondrion</keyword>
<keyword id="KW-0999">Mitochondrion inner membrane</keyword>
<keyword id="KW-0679">Respiratory chain</keyword>
<keyword id="KW-0812">Transmembrane</keyword>
<keyword id="KW-1133">Transmembrane helix</keyword>
<keyword id="KW-0813">Transport</keyword>
<keyword id="KW-0830">Ubiquinone</keyword>
<name>CYB_MUSST</name>
<comment type="function">
    <text evidence="2">Component of the ubiquinol-cytochrome c reductase complex (complex III or cytochrome b-c1 complex) that is part of the mitochondrial respiratory chain. The b-c1 complex mediates electron transfer from ubiquinol to cytochrome c. Contributes to the generation of a proton gradient across the mitochondrial membrane that is then used for ATP synthesis.</text>
</comment>
<comment type="cofactor">
    <cofactor evidence="2">
        <name>heme b</name>
        <dbReference type="ChEBI" id="CHEBI:60344"/>
    </cofactor>
    <text evidence="2">Binds 2 heme b groups non-covalently.</text>
</comment>
<comment type="subunit">
    <text evidence="2">The cytochrome bc1 complex contains 11 subunits: 3 respiratory subunits (MT-CYB, CYC1 and UQCRFS1), 2 core proteins (UQCRC1 and UQCRC2) and 6 low-molecular weight proteins (UQCRH/QCR6, UQCRB/QCR7, UQCRQ/QCR8, UQCR10/QCR9, UQCR11/QCR10 and a cleavage product of UQCRFS1). This cytochrome bc1 complex then forms a dimer.</text>
</comment>
<comment type="subcellular location">
    <subcellularLocation>
        <location evidence="2">Mitochondrion inner membrane</location>
        <topology evidence="2">Multi-pass membrane protein</topology>
    </subcellularLocation>
</comment>
<comment type="miscellaneous">
    <text evidence="1">Heme 1 (or BL or b562) is low-potential and absorbs at about 562 nm, and heme 2 (or BH or b566) is high-potential and absorbs at about 566 nm.</text>
</comment>
<comment type="similarity">
    <text evidence="3 4">Belongs to the cytochrome b family.</text>
</comment>
<comment type="caution">
    <text evidence="2">The full-length protein contains only eight transmembrane helices, not nine as predicted by bioinformatics tools.</text>
</comment>
<protein>
    <recommendedName>
        <fullName>Cytochrome b</fullName>
    </recommendedName>
    <alternativeName>
        <fullName>Complex III subunit 3</fullName>
    </alternativeName>
    <alternativeName>
        <fullName>Complex III subunit III</fullName>
    </alternativeName>
    <alternativeName>
        <fullName>Cytochrome b-c1 complex subunit 3</fullName>
    </alternativeName>
    <alternativeName>
        <fullName>Ubiquinol-cytochrome-c reductase complex cytochrome b subunit</fullName>
    </alternativeName>
</protein>
<gene>
    <name type="primary">MT-CYB</name>
    <name type="synonym">COB</name>
    <name type="synonym">CYTB</name>
    <name type="synonym">MTCYB</name>
</gene>
<dbReference type="EMBL" id="AJ299690">
    <property type="protein sequence ID" value="CAC35122.1"/>
    <property type="molecule type" value="Genomic_DNA"/>
</dbReference>
<dbReference type="SMR" id="Q9B1Z4"/>
<dbReference type="GO" id="GO:0005743">
    <property type="term" value="C:mitochondrial inner membrane"/>
    <property type="evidence" value="ECO:0007669"/>
    <property type="project" value="UniProtKB-SubCell"/>
</dbReference>
<dbReference type="GO" id="GO:0045275">
    <property type="term" value="C:respiratory chain complex III"/>
    <property type="evidence" value="ECO:0007669"/>
    <property type="project" value="InterPro"/>
</dbReference>
<dbReference type="GO" id="GO:0046872">
    <property type="term" value="F:metal ion binding"/>
    <property type="evidence" value="ECO:0007669"/>
    <property type="project" value="UniProtKB-KW"/>
</dbReference>
<dbReference type="GO" id="GO:0008121">
    <property type="term" value="F:ubiquinol-cytochrome-c reductase activity"/>
    <property type="evidence" value="ECO:0007669"/>
    <property type="project" value="InterPro"/>
</dbReference>
<dbReference type="GO" id="GO:0006122">
    <property type="term" value="P:mitochondrial electron transport, ubiquinol to cytochrome c"/>
    <property type="evidence" value="ECO:0007669"/>
    <property type="project" value="TreeGrafter"/>
</dbReference>
<dbReference type="CDD" id="cd00290">
    <property type="entry name" value="cytochrome_b_C"/>
    <property type="match status" value="1"/>
</dbReference>
<dbReference type="CDD" id="cd00284">
    <property type="entry name" value="Cytochrome_b_N"/>
    <property type="match status" value="1"/>
</dbReference>
<dbReference type="FunFam" id="1.20.810.10:FF:000002">
    <property type="entry name" value="Cytochrome b"/>
    <property type="match status" value="1"/>
</dbReference>
<dbReference type="Gene3D" id="1.20.810.10">
    <property type="entry name" value="Cytochrome Bc1 Complex, Chain C"/>
    <property type="match status" value="1"/>
</dbReference>
<dbReference type="InterPro" id="IPR005798">
    <property type="entry name" value="Cyt_b/b6_C"/>
</dbReference>
<dbReference type="InterPro" id="IPR036150">
    <property type="entry name" value="Cyt_b/b6_C_sf"/>
</dbReference>
<dbReference type="InterPro" id="IPR005797">
    <property type="entry name" value="Cyt_b/b6_N"/>
</dbReference>
<dbReference type="InterPro" id="IPR027387">
    <property type="entry name" value="Cytb/b6-like_sf"/>
</dbReference>
<dbReference type="InterPro" id="IPR030689">
    <property type="entry name" value="Cytochrome_b"/>
</dbReference>
<dbReference type="InterPro" id="IPR048260">
    <property type="entry name" value="Cytochrome_b_C_euk/bac"/>
</dbReference>
<dbReference type="InterPro" id="IPR048259">
    <property type="entry name" value="Cytochrome_b_N_euk/bac"/>
</dbReference>
<dbReference type="InterPro" id="IPR016174">
    <property type="entry name" value="Di-haem_cyt_TM"/>
</dbReference>
<dbReference type="PANTHER" id="PTHR19271">
    <property type="entry name" value="CYTOCHROME B"/>
    <property type="match status" value="1"/>
</dbReference>
<dbReference type="PANTHER" id="PTHR19271:SF16">
    <property type="entry name" value="CYTOCHROME B"/>
    <property type="match status" value="1"/>
</dbReference>
<dbReference type="Pfam" id="PF00032">
    <property type="entry name" value="Cytochrom_B_C"/>
    <property type="match status" value="1"/>
</dbReference>
<dbReference type="Pfam" id="PF00033">
    <property type="entry name" value="Cytochrome_B"/>
    <property type="match status" value="1"/>
</dbReference>
<dbReference type="PIRSF" id="PIRSF038885">
    <property type="entry name" value="COB"/>
    <property type="match status" value="1"/>
</dbReference>
<dbReference type="SUPFAM" id="SSF81648">
    <property type="entry name" value="a domain/subunit of cytochrome bc1 complex (Ubiquinol-cytochrome c reductase)"/>
    <property type="match status" value="1"/>
</dbReference>
<dbReference type="SUPFAM" id="SSF81342">
    <property type="entry name" value="Transmembrane di-heme cytochromes"/>
    <property type="match status" value="1"/>
</dbReference>
<dbReference type="PROSITE" id="PS51003">
    <property type="entry name" value="CYTB_CTER"/>
    <property type="match status" value="1"/>
</dbReference>
<dbReference type="PROSITE" id="PS51002">
    <property type="entry name" value="CYTB_NTER"/>
    <property type="match status" value="1"/>
</dbReference>
<accession>Q9B1Z4</accession>
<proteinExistence type="inferred from homology"/>
<sequence length="380" mass="42320">MALNLRKNHPLLKTINDALIDLPTPSNISAWWNFGSLLGICLITQIVTGLLLATHYTADTSLAFNSVAHMCRDVQFGWLIRNLHANGASFFFICIYFHIGRGFYYGSYLNKETWNIGVVLLLTLMATAFVGYVLPWGQMSFWGATVITNLFSAIPYIGQTLVEWAWGGFSVDNPTLTRFFALHFLLPFVIVGLTLVHLTFLHETGSNNPLGIPADCDKIPFHPYYSTKDILGFALMLILLVSLALFSPNLLGDPENFTPANPLATPPHIKPEWYFLFAYAILRSIPNKLGGVLALAASVLVLFLAPLLHKSKQRSLTFRPISQVLFWALVANLLILTWVGSQPVEHPFIIIGQLASLSYFTIILVLFPIAAVLENKMLKL</sequence>